<feature type="chain" id="PRO_0000093115" description="UvrABC system protein A">
    <location>
        <begin position="1" status="less than"/>
        <end position="569"/>
    </location>
</feature>
<feature type="domain" description="ABC transporter" evidence="2">
    <location>
        <begin position="223"/>
        <end position="550"/>
    </location>
</feature>
<feature type="zinc finger region" description="C4-type">
    <location>
        <begin position="359"/>
        <end position="385"/>
    </location>
</feature>
<feature type="binding site" evidence="2">
    <location>
        <begin position="259"/>
        <end position="266"/>
    </location>
    <ligand>
        <name>ATP</name>
        <dbReference type="ChEBI" id="CHEBI:30616"/>
    </ligand>
</feature>
<feature type="non-terminal residue">
    <location>
        <position position="1"/>
    </location>
</feature>
<proteinExistence type="inferred from homology"/>
<name>UVRA_VITST</name>
<organism>
    <name type="scientific">Vitreoscilla stercoraria</name>
    <dbReference type="NCBI Taxonomy" id="61"/>
    <lineage>
        <taxon>Bacteria</taxon>
        <taxon>Pseudomonadati</taxon>
        <taxon>Pseudomonadota</taxon>
        <taxon>Betaproteobacteria</taxon>
        <taxon>Neisseriales</taxon>
        <taxon>Neisseriaceae</taxon>
        <taxon>Vitreoscilla</taxon>
    </lineage>
</organism>
<sequence length="569" mass="61918">ARAIRVHGKLEPIYVETVAELPEASRLYTVRARCERSPLCVCRWRKFHHISAWPLSKTLDFFQNLDLGGNKQQIAEKVLKEITERLGFLINVGLNYLSLARSAETLSGGEAQRIRLASQIGSGLTGVMYVLDEPSIGLHQRDNDRLLGTLKHLRDLGNSVIVVEHDEDAIRAADYVVDMGPGAGELGGAVLIADTPEKIAACEQSITGRYLSGKEAIYIPAQRTPKDAERMLVLKGASGQNLKDVTLELPLGLMTCITGVSGSGKSTLINDTLAKIAQRDLNRATKDEPSPYTEIQGLEQLDKVINVDQSPIGRTPRSNPATYTGVFTPIRELFAGVPVSRERGYNVGRFSFNVKGGRCEACQGDGVLKVEMHFLPDVYVPCEVCHGKRYNRETLEILYKGKNIHQVLEMTVAEAHAFFEAVPTLSRKLQTLMDVGLSYVRLGQSATTLSGGEAQRVKLALELSKRDTGRTLYILDEPTTGLHFADIALLLEVITRLKGKGNSIVIIEHNLDVIKTADYIIDLGPEGGDGDGGGRIIAQGTPEDVAATAGSYTGQYLSQVLANSQTAAV</sequence>
<keyword id="KW-0067">ATP-binding</keyword>
<keyword id="KW-0963">Cytoplasm</keyword>
<keyword id="KW-0227">DNA damage</keyword>
<keyword id="KW-0228">DNA excision</keyword>
<keyword id="KW-0234">DNA repair</keyword>
<keyword id="KW-0238">DNA-binding</keyword>
<keyword id="KW-0267">Excision nuclease</keyword>
<keyword id="KW-0479">Metal-binding</keyword>
<keyword id="KW-0547">Nucleotide-binding</keyword>
<keyword id="KW-0677">Repeat</keyword>
<keyword id="KW-0742">SOS response</keyword>
<keyword id="KW-0862">Zinc</keyword>
<keyword id="KW-0863">Zinc-finger</keyword>
<comment type="function">
    <text evidence="1">The UvrABC repair system catalyzes the recognition and processing of DNA lesions. UvrA is an ATPase and a DNA-binding protein. A damage recognition complex composed of 2 UvrA and 2 UvrB subunits scans DNA for abnormalities. When the presence of a lesion has been verified by UvrB, the UvrA molecules dissociate (By similarity).</text>
</comment>
<comment type="subunit">
    <text evidence="1">Forms a heterotetramer with UvrB during the search for lesions.</text>
</comment>
<comment type="subcellular location">
    <subcellularLocation>
        <location evidence="1">Cytoplasm</location>
    </subcellularLocation>
</comment>
<comment type="similarity">
    <text evidence="3">Belongs to the ABC transporter superfamily. UvrA family.</text>
</comment>
<reference key="1">
    <citation type="journal article" date="1994" name="Appl. Microbiol. Biotechnol.">
        <title>Sequence of the region downstream of the Vitreoscilla hemoglobin gene: vgb is not part of a multigene operon.</title>
        <authorList>
            <person name="Liu S.C."/>
            <person name="Liu Y.X."/>
            <person name="Webster D.A."/>
            <person name="Stark B.C."/>
        </authorList>
    </citation>
    <scope>NUCLEOTIDE SEQUENCE [GENOMIC DNA]</scope>
    <source>
        <strain>C1</strain>
    </source>
</reference>
<protein>
    <recommendedName>
        <fullName>UvrABC system protein A</fullName>
        <shortName>UvrA protein</shortName>
    </recommendedName>
    <alternativeName>
        <fullName>Excinuclease ABC subunit A</fullName>
    </alternativeName>
</protein>
<evidence type="ECO:0000250" key="1"/>
<evidence type="ECO:0000255" key="2">
    <source>
        <dbReference type="PROSITE-ProRule" id="PRU00434"/>
    </source>
</evidence>
<evidence type="ECO:0000305" key="3"/>
<dbReference type="EMBL" id="L21670">
    <property type="protein sequence ID" value="AAA75507.1"/>
    <property type="molecule type" value="Genomic_DNA"/>
</dbReference>
<dbReference type="SMR" id="Q08518"/>
<dbReference type="GO" id="GO:0005737">
    <property type="term" value="C:cytoplasm"/>
    <property type="evidence" value="ECO:0007669"/>
    <property type="project" value="UniProtKB-SubCell"/>
</dbReference>
<dbReference type="GO" id="GO:0009380">
    <property type="term" value="C:excinuclease repair complex"/>
    <property type="evidence" value="ECO:0007669"/>
    <property type="project" value="InterPro"/>
</dbReference>
<dbReference type="GO" id="GO:0005524">
    <property type="term" value="F:ATP binding"/>
    <property type="evidence" value="ECO:0007669"/>
    <property type="project" value="UniProtKB-KW"/>
</dbReference>
<dbReference type="GO" id="GO:0016887">
    <property type="term" value="F:ATP hydrolysis activity"/>
    <property type="evidence" value="ECO:0007669"/>
    <property type="project" value="InterPro"/>
</dbReference>
<dbReference type="GO" id="GO:0003677">
    <property type="term" value="F:DNA binding"/>
    <property type="evidence" value="ECO:0007669"/>
    <property type="project" value="UniProtKB-KW"/>
</dbReference>
<dbReference type="GO" id="GO:0004518">
    <property type="term" value="F:nuclease activity"/>
    <property type="evidence" value="ECO:0007669"/>
    <property type="project" value="UniProtKB-KW"/>
</dbReference>
<dbReference type="GO" id="GO:0008270">
    <property type="term" value="F:zinc ion binding"/>
    <property type="evidence" value="ECO:0007669"/>
    <property type="project" value="UniProtKB-KW"/>
</dbReference>
<dbReference type="GO" id="GO:0006289">
    <property type="term" value="P:nucleotide-excision repair"/>
    <property type="evidence" value="ECO:0007669"/>
    <property type="project" value="InterPro"/>
</dbReference>
<dbReference type="GO" id="GO:0009432">
    <property type="term" value="P:SOS response"/>
    <property type="evidence" value="ECO:0007669"/>
    <property type="project" value="UniProtKB-KW"/>
</dbReference>
<dbReference type="CDD" id="cd03271">
    <property type="entry name" value="ABC_UvrA_II"/>
    <property type="match status" value="1"/>
</dbReference>
<dbReference type="FunFam" id="1.20.1580.10:FF:000002">
    <property type="entry name" value="UvrABC system protein A"/>
    <property type="match status" value="1"/>
</dbReference>
<dbReference type="FunFam" id="3.40.50.300:FF:000272">
    <property type="entry name" value="UvrABC system protein A"/>
    <property type="match status" value="1"/>
</dbReference>
<dbReference type="Gene3D" id="1.20.1580.10">
    <property type="entry name" value="ABC transporter ATPase like domain"/>
    <property type="match status" value="1"/>
</dbReference>
<dbReference type="Gene3D" id="3.40.50.300">
    <property type="entry name" value="P-loop containing nucleotide triphosphate hydrolases"/>
    <property type="match status" value="2"/>
</dbReference>
<dbReference type="InterPro" id="IPR003439">
    <property type="entry name" value="ABC_transporter-like_ATP-bd"/>
</dbReference>
<dbReference type="InterPro" id="IPR017871">
    <property type="entry name" value="ABC_transporter-like_CS"/>
</dbReference>
<dbReference type="InterPro" id="IPR027417">
    <property type="entry name" value="P-loop_NTPase"/>
</dbReference>
<dbReference type="InterPro" id="IPR004602">
    <property type="entry name" value="UvrA"/>
</dbReference>
<dbReference type="NCBIfam" id="TIGR00630">
    <property type="entry name" value="uvra"/>
    <property type="match status" value="1"/>
</dbReference>
<dbReference type="PANTHER" id="PTHR43152">
    <property type="entry name" value="UVRABC SYSTEM PROTEIN A"/>
    <property type="match status" value="1"/>
</dbReference>
<dbReference type="PANTHER" id="PTHR43152:SF3">
    <property type="entry name" value="UVRABC SYSTEM PROTEIN A"/>
    <property type="match status" value="1"/>
</dbReference>
<dbReference type="Pfam" id="PF00005">
    <property type="entry name" value="ABC_tran"/>
    <property type="match status" value="1"/>
</dbReference>
<dbReference type="SUPFAM" id="SSF52540">
    <property type="entry name" value="P-loop containing nucleoside triphosphate hydrolases"/>
    <property type="match status" value="2"/>
</dbReference>
<dbReference type="PROSITE" id="PS00211">
    <property type="entry name" value="ABC_TRANSPORTER_1"/>
    <property type="match status" value="2"/>
</dbReference>
<dbReference type="PROSITE" id="PS50893">
    <property type="entry name" value="ABC_TRANSPORTER_2"/>
    <property type="match status" value="1"/>
</dbReference>
<gene>
    <name type="primary">uvrA</name>
</gene>
<accession>Q08518</accession>